<reference key="1">
    <citation type="journal article" date="1992" name="Regul. Pept.">
        <title>Isolation and primary structure of an amphibian neurotensin.</title>
        <authorList>
            <person name="Shaw C."/>
            <person name="McKay D.M."/>
            <person name="Halton D.W."/>
            <person name="Thim L."/>
            <person name="Buchanan K.D."/>
        </authorList>
    </citation>
    <scope>PROTEIN SEQUENCE</scope>
    <scope>PYROGLUTAMATE FORMATION AT GLN-1</scope>
</reference>
<proteinExistence type="evidence at protein level"/>
<organism>
    <name type="scientific">Rana temporaria</name>
    <name type="common">European common frog</name>
    <dbReference type="NCBI Taxonomy" id="8407"/>
    <lineage>
        <taxon>Eukaryota</taxon>
        <taxon>Metazoa</taxon>
        <taxon>Chordata</taxon>
        <taxon>Craniata</taxon>
        <taxon>Vertebrata</taxon>
        <taxon>Euteleostomi</taxon>
        <taxon>Amphibia</taxon>
        <taxon>Batrachia</taxon>
        <taxon>Anura</taxon>
        <taxon>Neobatrachia</taxon>
        <taxon>Ranoidea</taxon>
        <taxon>Ranidae</taxon>
        <taxon>Rana</taxon>
        <taxon>Rana</taxon>
    </lineage>
</organism>
<evidence type="ECO:0000269" key="1">
    <source>
    </source>
</evidence>
<evidence type="ECO:0000305" key="2"/>
<protein>
    <recommendedName>
        <fullName>Neurotensin</fullName>
        <shortName>NT</shortName>
    </recommendedName>
</protein>
<sequence length="13" mass="1569">QSHISKARRPYIL</sequence>
<feature type="peptide" id="PRO_0000044071" description="Neurotensin">
    <location>
        <begin position="1"/>
        <end position="13"/>
    </location>
</feature>
<feature type="modified residue" description="Pyrrolidone carboxylic acid" evidence="1">
    <location>
        <position position="1"/>
    </location>
</feature>
<accession>P41536</accession>
<dbReference type="PIR" id="A61067">
    <property type="entry name" value="A61067"/>
</dbReference>
<dbReference type="GO" id="GO:0005576">
    <property type="term" value="C:extracellular region"/>
    <property type="evidence" value="ECO:0007669"/>
    <property type="project" value="UniProtKB-SubCell"/>
</dbReference>
<dbReference type="GO" id="GO:0097746">
    <property type="term" value="P:blood vessel diameter maintenance"/>
    <property type="evidence" value="ECO:0007669"/>
    <property type="project" value="UniProtKB-KW"/>
</dbReference>
<comment type="function">
    <text>Smooth muscle-contracting peptide.</text>
</comment>
<comment type="subcellular location">
    <subcellularLocation>
        <location>Secreted</location>
    </subcellularLocation>
</comment>
<comment type="tissue specificity">
    <text>Identified in brain, intestine, and rectum, but not in stomach or skin.</text>
</comment>
<comment type="similarity">
    <text evidence="2">Belongs to the neurotensin family.</text>
</comment>
<keyword id="KW-0903">Direct protein sequencing</keyword>
<keyword id="KW-0873">Pyrrolidone carboxylic acid</keyword>
<keyword id="KW-0964">Secreted</keyword>
<keyword id="KW-0838">Vasoactive</keyword>
<name>NEUT_RANTE</name>